<keyword id="KW-0479">Metal-binding</keyword>
<keyword id="KW-0520">NAD</keyword>
<keyword id="KW-0521">NADP</keyword>
<keyword id="KW-0558">Oxidation</keyword>
<keyword id="KW-0560">Oxidoreductase</keyword>
<keyword id="KW-0630">Potassium</keyword>
<comment type="function">
    <text evidence="1">Involved in the biosynthesis of the osmoprotectant glycine betaine. Catalyzes the irreversible oxidation of betaine aldehyde to the corresponding acid.</text>
</comment>
<comment type="catalytic activity">
    <reaction evidence="1">
        <text>betaine aldehyde + NAD(+) + H2O = glycine betaine + NADH + 2 H(+)</text>
        <dbReference type="Rhea" id="RHEA:15305"/>
        <dbReference type="ChEBI" id="CHEBI:15377"/>
        <dbReference type="ChEBI" id="CHEBI:15378"/>
        <dbReference type="ChEBI" id="CHEBI:15710"/>
        <dbReference type="ChEBI" id="CHEBI:17750"/>
        <dbReference type="ChEBI" id="CHEBI:57540"/>
        <dbReference type="ChEBI" id="CHEBI:57945"/>
        <dbReference type="EC" id="1.2.1.8"/>
    </reaction>
    <physiologicalReaction direction="left-to-right" evidence="1">
        <dbReference type="Rhea" id="RHEA:15306"/>
    </physiologicalReaction>
</comment>
<comment type="cofactor">
    <cofactor evidence="1">
        <name>K(+)</name>
        <dbReference type="ChEBI" id="CHEBI:29103"/>
    </cofactor>
    <text evidence="1">Binds 2 potassium ions per subunit.</text>
</comment>
<comment type="pathway">
    <text evidence="1">Amine and polyamine biosynthesis; betaine biosynthesis via choline pathway; betaine from betaine aldehyde: step 1/1.</text>
</comment>
<comment type="subunit">
    <text evidence="1">Dimer of dimers.</text>
</comment>
<comment type="similarity">
    <text evidence="1">Belongs to the aldehyde dehydrogenase family.</text>
</comment>
<accession>C3K3D2</accession>
<gene>
    <name evidence="1" type="primary">betB</name>
    <name type="ordered locus">PFLU_5685</name>
</gene>
<feature type="chain" id="PRO_1000213000" description="Betaine aldehyde dehydrogenase">
    <location>
        <begin position="1"/>
        <end position="490"/>
    </location>
</feature>
<feature type="active site" description="Charge relay system" evidence="1">
    <location>
        <position position="162"/>
    </location>
</feature>
<feature type="active site" description="Proton acceptor" evidence="1">
    <location>
        <position position="252"/>
    </location>
</feature>
<feature type="active site" description="Nucleophile" evidence="1">
    <location>
        <position position="286"/>
    </location>
</feature>
<feature type="active site" description="Charge relay system" evidence="1">
    <location>
        <position position="464"/>
    </location>
</feature>
<feature type="binding site" evidence="1">
    <location>
        <position position="27"/>
    </location>
    <ligand>
        <name>K(+)</name>
        <dbReference type="ChEBI" id="CHEBI:29103"/>
        <label>1</label>
    </ligand>
</feature>
<feature type="binding site" evidence="1">
    <location>
        <position position="93"/>
    </location>
    <ligand>
        <name>K(+)</name>
        <dbReference type="ChEBI" id="CHEBI:29103"/>
        <label>1</label>
    </ligand>
</feature>
<feature type="binding site" evidence="1">
    <location>
        <begin position="150"/>
        <end position="152"/>
    </location>
    <ligand>
        <name>NAD(+)</name>
        <dbReference type="ChEBI" id="CHEBI:57540"/>
    </ligand>
</feature>
<feature type="binding site" evidence="1">
    <location>
        <begin position="176"/>
        <end position="179"/>
    </location>
    <ligand>
        <name>NAD(+)</name>
        <dbReference type="ChEBI" id="CHEBI:57540"/>
    </ligand>
</feature>
<feature type="binding site" evidence="1">
    <location>
        <position position="180"/>
    </location>
    <ligand>
        <name>K(+)</name>
        <dbReference type="ChEBI" id="CHEBI:29103"/>
        <label>1</label>
    </ligand>
</feature>
<feature type="binding site" evidence="1">
    <location>
        <begin position="230"/>
        <end position="233"/>
    </location>
    <ligand>
        <name>NAD(+)</name>
        <dbReference type="ChEBI" id="CHEBI:57540"/>
    </ligand>
</feature>
<feature type="binding site" evidence="1">
    <location>
        <position position="246"/>
    </location>
    <ligand>
        <name>K(+)</name>
        <dbReference type="ChEBI" id="CHEBI:29103"/>
        <label>2</label>
    </ligand>
</feature>
<feature type="binding site" evidence="1">
    <location>
        <position position="254"/>
    </location>
    <ligand>
        <name>NAD(+)</name>
        <dbReference type="ChEBI" id="CHEBI:57540"/>
    </ligand>
</feature>
<feature type="binding site" description="covalent" evidence="1">
    <location>
        <position position="286"/>
    </location>
    <ligand>
        <name>NAD(+)</name>
        <dbReference type="ChEBI" id="CHEBI:57540"/>
    </ligand>
</feature>
<feature type="binding site" evidence="1">
    <location>
        <position position="387"/>
    </location>
    <ligand>
        <name>NAD(+)</name>
        <dbReference type="ChEBI" id="CHEBI:57540"/>
    </ligand>
</feature>
<feature type="binding site" evidence="1">
    <location>
        <position position="457"/>
    </location>
    <ligand>
        <name>K(+)</name>
        <dbReference type="ChEBI" id="CHEBI:29103"/>
        <label>2</label>
    </ligand>
</feature>
<feature type="binding site" evidence="1">
    <location>
        <position position="460"/>
    </location>
    <ligand>
        <name>K(+)</name>
        <dbReference type="ChEBI" id="CHEBI:29103"/>
        <label>2</label>
    </ligand>
</feature>
<feature type="site" description="Seems to be a necessary countercharge to the potassium cations" evidence="1">
    <location>
        <position position="248"/>
    </location>
</feature>
<feature type="modified residue" description="Cysteine sulfenic acid (-SOH)" evidence="1">
    <location>
        <position position="286"/>
    </location>
</feature>
<organism>
    <name type="scientific">Pseudomonas fluorescens (strain SBW25)</name>
    <dbReference type="NCBI Taxonomy" id="216595"/>
    <lineage>
        <taxon>Bacteria</taxon>
        <taxon>Pseudomonadati</taxon>
        <taxon>Pseudomonadota</taxon>
        <taxon>Gammaproteobacteria</taxon>
        <taxon>Pseudomonadales</taxon>
        <taxon>Pseudomonadaceae</taxon>
        <taxon>Pseudomonas</taxon>
    </lineage>
</organism>
<name>BETB_PSEFS</name>
<dbReference type="EC" id="1.2.1.8" evidence="1"/>
<dbReference type="EMBL" id="AM181176">
    <property type="protein sequence ID" value="CAY53022.1"/>
    <property type="molecule type" value="Genomic_DNA"/>
</dbReference>
<dbReference type="RefSeq" id="WP_015886275.1">
    <property type="nucleotide sequence ID" value="NC_012660.1"/>
</dbReference>
<dbReference type="SMR" id="C3K3D2"/>
<dbReference type="STRING" id="294.SRM1_05337"/>
<dbReference type="eggNOG" id="COG1012">
    <property type="taxonomic scope" value="Bacteria"/>
</dbReference>
<dbReference type="HOGENOM" id="CLU_005391_0_0_6"/>
<dbReference type="OrthoDB" id="9812625at2"/>
<dbReference type="UniPathway" id="UPA00529">
    <property type="reaction ID" value="UER00386"/>
</dbReference>
<dbReference type="GO" id="GO:0008802">
    <property type="term" value="F:betaine-aldehyde dehydrogenase (NAD+) activity"/>
    <property type="evidence" value="ECO:0007669"/>
    <property type="project" value="UniProtKB-UniRule"/>
</dbReference>
<dbReference type="GO" id="GO:0046872">
    <property type="term" value="F:metal ion binding"/>
    <property type="evidence" value="ECO:0007669"/>
    <property type="project" value="UniProtKB-KW"/>
</dbReference>
<dbReference type="GO" id="GO:0019285">
    <property type="term" value="P:glycine betaine biosynthetic process from choline"/>
    <property type="evidence" value="ECO:0007669"/>
    <property type="project" value="UniProtKB-UniRule"/>
</dbReference>
<dbReference type="CDD" id="cd07090">
    <property type="entry name" value="ALDH_F9_TMBADH"/>
    <property type="match status" value="1"/>
</dbReference>
<dbReference type="FunFam" id="3.40.309.10:FF:000014">
    <property type="entry name" value="NAD/NADP-dependent betaine aldehyde dehydrogenase"/>
    <property type="match status" value="1"/>
</dbReference>
<dbReference type="FunFam" id="3.40.605.10:FF:000007">
    <property type="entry name" value="NAD/NADP-dependent betaine aldehyde dehydrogenase"/>
    <property type="match status" value="1"/>
</dbReference>
<dbReference type="Gene3D" id="3.40.605.10">
    <property type="entry name" value="Aldehyde Dehydrogenase, Chain A, domain 1"/>
    <property type="match status" value="1"/>
</dbReference>
<dbReference type="Gene3D" id="3.40.309.10">
    <property type="entry name" value="Aldehyde Dehydrogenase, Chain A, domain 2"/>
    <property type="match status" value="1"/>
</dbReference>
<dbReference type="HAMAP" id="MF_00804">
    <property type="entry name" value="BADH"/>
    <property type="match status" value="1"/>
</dbReference>
<dbReference type="InterPro" id="IPR016161">
    <property type="entry name" value="Ald_DH/histidinol_DH"/>
</dbReference>
<dbReference type="InterPro" id="IPR016163">
    <property type="entry name" value="Ald_DH_C"/>
</dbReference>
<dbReference type="InterPro" id="IPR016160">
    <property type="entry name" value="Ald_DH_CS_CYS"/>
</dbReference>
<dbReference type="InterPro" id="IPR029510">
    <property type="entry name" value="Ald_DH_CS_GLU"/>
</dbReference>
<dbReference type="InterPro" id="IPR016162">
    <property type="entry name" value="Ald_DH_N"/>
</dbReference>
<dbReference type="InterPro" id="IPR015590">
    <property type="entry name" value="Aldehyde_DH_dom"/>
</dbReference>
<dbReference type="InterPro" id="IPR011264">
    <property type="entry name" value="BADH"/>
</dbReference>
<dbReference type="NCBIfam" id="TIGR01804">
    <property type="entry name" value="BADH"/>
    <property type="match status" value="1"/>
</dbReference>
<dbReference type="NCBIfam" id="NF009725">
    <property type="entry name" value="PRK13252.1"/>
    <property type="match status" value="1"/>
</dbReference>
<dbReference type="PANTHER" id="PTHR11699">
    <property type="entry name" value="ALDEHYDE DEHYDROGENASE-RELATED"/>
    <property type="match status" value="1"/>
</dbReference>
<dbReference type="Pfam" id="PF00171">
    <property type="entry name" value="Aldedh"/>
    <property type="match status" value="1"/>
</dbReference>
<dbReference type="SUPFAM" id="SSF53720">
    <property type="entry name" value="ALDH-like"/>
    <property type="match status" value="1"/>
</dbReference>
<dbReference type="PROSITE" id="PS00070">
    <property type="entry name" value="ALDEHYDE_DEHYDR_CYS"/>
    <property type="match status" value="1"/>
</dbReference>
<dbReference type="PROSITE" id="PS00687">
    <property type="entry name" value="ALDEHYDE_DEHYDR_GLU"/>
    <property type="match status" value="1"/>
</dbReference>
<sequence>MARFDLQKLYIDGGYSDAGSDATFEAINPANGEVLAQVQRATKEDVERAVVSAEKGQKIWAAMTAMERSRILRRAVDILRERNDELAALETLDTGKAFSETQYVDVVTGADVLEYYAGLVPAIEGEQIPLRDTSFVYTRREPLGVVAGIGAWNYPIQIALWKSAPALAAGNAMIFKPSEVTSLTTLKLAEIYTEAGVPAGVFNVLTGSGREVGTWLTEHPRIEKVSFTGGTDTGKKVMASASSSSLKEVTMELGGKSPLIVFEDADLDRAADIAMMANFYSSGQVCTNGTRVFVPKHLQAAFEAKIVERVARIRVGDPQDENTNFGPLVSFAHMESVLGYIAKGKEQGARLLCGGDRLTDGDFAKGAYVAPTVFTDCTDEMTIVREEIFGPVMSILTYETEEEVIRRANDTDFGLAAGLVTKDLNRAHRVIHQLEAGICWINAWGESDAKMPVGGYKQSGVGRENGISSLNNFTRIKSVQVELGDYASVF</sequence>
<proteinExistence type="inferred from homology"/>
<reference key="1">
    <citation type="journal article" date="2009" name="Genome Biol.">
        <title>Genomic and genetic analyses of diversity and plant interactions of Pseudomonas fluorescens.</title>
        <authorList>
            <person name="Silby M.W."/>
            <person name="Cerdeno-Tarraga A.M."/>
            <person name="Vernikos G.S."/>
            <person name="Giddens S.R."/>
            <person name="Jackson R.W."/>
            <person name="Preston G.M."/>
            <person name="Zhang X.-X."/>
            <person name="Moon C.D."/>
            <person name="Gehrig S.M."/>
            <person name="Godfrey S.A.C."/>
            <person name="Knight C.G."/>
            <person name="Malone J.G."/>
            <person name="Robinson Z."/>
            <person name="Spiers A.J."/>
            <person name="Harris S."/>
            <person name="Challis G.L."/>
            <person name="Yaxley A.M."/>
            <person name="Harris D."/>
            <person name="Seeger K."/>
            <person name="Murphy L."/>
            <person name="Rutter S."/>
            <person name="Squares R."/>
            <person name="Quail M.A."/>
            <person name="Saunders E."/>
            <person name="Mavromatis K."/>
            <person name="Brettin T.S."/>
            <person name="Bentley S.D."/>
            <person name="Hothersall J."/>
            <person name="Stephens E."/>
            <person name="Thomas C.M."/>
            <person name="Parkhill J."/>
            <person name="Levy S.B."/>
            <person name="Rainey P.B."/>
            <person name="Thomson N.R."/>
        </authorList>
    </citation>
    <scope>NUCLEOTIDE SEQUENCE [LARGE SCALE GENOMIC DNA]</scope>
    <source>
        <strain>SBW25</strain>
    </source>
</reference>
<evidence type="ECO:0000255" key="1">
    <source>
        <dbReference type="HAMAP-Rule" id="MF_00804"/>
    </source>
</evidence>
<protein>
    <recommendedName>
        <fullName evidence="1">Betaine aldehyde dehydrogenase</fullName>
        <shortName evidence="1">BADH</shortName>
        <ecNumber evidence="1">1.2.1.8</ecNumber>
    </recommendedName>
</protein>